<organism>
    <name type="scientific">Escherichia coli (strain 55989 / EAEC)</name>
    <dbReference type="NCBI Taxonomy" id="585055"/>
    <lineage>
        <taxon>Bacteria</taxon>
        <taxon>Pseudomonadati</taxon>
        <taxon>Pseudomonadota</taxon>
        <taxon>Gammaproteobacteria</taxon>
        <taxon>Enterobacterales</taxon>
        <taxon>Enterobacteriaceae</taxon>
        <taxon>Escherichia</taxon>
    </lineage>
</organism>
<proteinExistence type="inferred from homology"/>
<reference key="1">
    <citation type="journal article" date="2009" name="PLoS Genet.">
        <title>Organised genome dynamics in the Escherichia coli species results in highly diverse adaptive paths.</title>
        <authorList>
            <person name="Touchon M."/>
            <person name="Hoede C."/>
            <person name="Tenaillon O."/>
            <person name="Barbe V."/>
            <person name="Baeriswyl S."/>
            <person name="Bidet P."/>
            <person name="Bingen E."/>
            <person name="Bonacorsi S."/>
            <person name="Bouchier C."/>
            <person name="Bouvet O."/>
            <person name="Calteau A."/>
            <person name="Chiapello H."/>
            <person name="Clermont O."/>
            <person name="Cruveiller S."/>
            <person name="Danchin A."/>
            <person name="Diard M."/>
            <person name="Dossat C."/>
            <person name="Karoui M.E."/>
            <person name="Frapy E."/>
            <person name="Garry L."/>
            <person name="Ghigo J.M."/>
            <person name="Gilles A.M."/>
            <person name="Johnson J."/>
            <person name="Le Bouguenec C."/>
            <person name="Lescat M."/>
            <person name="Mangenot S."/>
            <person name="Martinez-Jehanne V."/>
            <person name="Matic I."/>
            <person name="Nassif X."/>
            <person name="Oztas S."/>
            <person name="Petit M.A."/>
            <person name="Pichon C."/>
            <person name="Rouy Z."/>
            <person name="Ruf C.S."/>
            <person name="Schneider D."/>
            <person name="Tourret J."/>
            <person name="Vacherie B."/>
            <person name="Vallenet D."/>
            <person name="Medigue C."/>
            <person name="Rocha E.P.C."/>
            <person name="Denamur E."/>
        </authorList>
    </citation>
    <scope>NUCLEOTIDE SEQUENCE [LARGE SCALE GENOMIC DNA]</scope>
    <source>
        <strain>55989 / EAEC</strain>
    </source>
</reference>
<name>RBSD_ECO55</name>
<accession>B7L894</accession>
<sequence length="139" mass="15283">MKKGTVLNSDISSVISRLGHTDTLVVCDAGLPIPKSTTRIDMALTQGVPSFMQVLGVVTNEMQVEAAIIAEEIKQHNPQLHETLLTHLEQLQKHQGNTIEIRYTTHEQFKQQTAESQAVIRSGECSPYANIILCAGVTF</sequence>
<gene>
    <name evidence="1" type="primary">rbsD</name>
    <name type="ordered locus">EC55989_4223</name>
</gene>
<dbReference type="EC" id="5.4.99.62" evidence="1"/>
<dbReference type="EMBL" id="CU928145">
    <property type="protein sequence ID" value="CAV00845.1"/>
    <property type="molecule type" value="Genomic_DNA"/>
</dbReference>
<dbReference type="RefSeq" id="WP_000715936.1">
    <property type="nucleotide sequence ID" value="NC_011748.1"/>
</dbReference>
<dbReference type="SMR" id="B7L894"/>
<dbReference type="GeneID" id="93778201"/>
<dbReference type="KEGG" id="eck:EC55989_4223"/>
<dbReference type="HOGENOM" id="CLU_135498_0_0_6"/>
<dbReference type="UniPathway" id="UPA00916">
    <property type="reaction ID" value="UER00888"/>
</dbReference>
<dbReference type="Proteomes" id="UP000000746">
    <property type="component" value="Chromosome"/>
</dbReference>
<dbReference type="GO" id="GO:0005829">
    <property type="term" value="C:cytosol"/>
    <property type="evidence" value="ECO:0007669"/>
    <property type="project" value="TreeGrafter"/>
</dbReference>
<dbReference type="GO" id="GO:0062193">
    <property type="term" value="F:D-ribose pyranase activity"/>
    <property type="evidence" value="ECO:0007669"/>
    <property type="project" value="UniProtKB-EC"/>
</dbReference>
<dbReference type="GO" id="GO:0016872">
    <property type="term" value="F:intramolecular lyase activity"/>
    <property type="evidence" value="ECO:0007669"/>
    <property type="project" value="UniProtKB-UniRule"/>
</dbReference>
<dbReference type="GO" id="GO:0048029">
    <property type="term" value="F:monosaccharide binding"/>
    <property type="evidence" value="ECO:0007669"/>
    <property type="project" value="InterPro"/>
</dbReference>
<dbReference type="GO" id="GO:0019303">
    <property type="term" value="P:D-ribose catabolic process"/>
    <property type="evidence" value="ECO:0007669"/>
    <property type="project" value="UniProtKB-UniRule"/>
</dbReference>
<dbReference type="FunFam" id="3.40.1650.10:FF:000002">
    <property type="entry name" value="D-ribose pyranase"/>
    <property type="match status" value="1"/>
</dbReference>
<dbReference type="Gene3D" id="3.40.1650.10">
    <property type="entry name" value="RbsD-like domain"/>
    <property type="match status" value="1"/>
</dbReference>
<dbReference type="HAMAP" id="MF_01661">
    <property type="entry name" value="D_rib_pyranase"/>
    <property type="match status" value="1"/>
</dbReference>
<dbReference type="InterPro" id="IPR023064">
    <property type="entry name" value="D-ribose_pyranase"/>
</dbReference>
<dbReference type="InterPro" id="IPR023750">
    <property type="entry name" value="RbsD-like_sf"/>
</dbReference>
<dbReference type="InterPro" id="IPR007721">
    <property type="entry name" value="RbsD_FucU"/>
</dbReference>
<dbReference type="NCBIfam" id="NF008761">
    <property type="entry name" value="PRK11797.1"/>
    <property type="match status" value="1"/>
</dbReference>
<dbReference type="PANTHER" id="PTHR37831">
    <property type="entry name" value="D-RIBOSE PYRANASE"/>
    <property type="match status" value="1"/>
</dbReference>
<dbReference type="PANTHER" id="PTHR37831:SF1">
    <property type="entry name" value="D-RIBOSE PYRANASE"/>
    <property type="match status" value="1"/>
</dbReference>
<dbReference type="Pfam" id="PF05025">
    <property type="entry name" value="RbsD_FucU"/>
    <property type="match status" value="1"/>
</dbReference>
<dbReference type="SUPFAM" id="SSF102546">
    <property type="entry name" value="RbsD-like"/>
    <property type="match status" value="1"/>
</dbReference>
<comment type="function">
    <text evidence="1">Catalyzes the interconversion of beta-pyran and beta-furan forms of D-ribose.</text>
</comment>
<comment type="catalytic activity">
    <reaction evidence="1">
        <text>beta-D-ribopyranose = beta-D-ribofuranose</text>
        <dbReference type="Rhea" id="RHEA:25432"/>
        <dbReference type="ChEBI" id="CHEBI:27476"/>
        <dbReference type="ChEBI" id="CHEBI:47002"/>
        <dbReference type="EC" id="5.4.99.62"/>
    </reaction>
</comment>
<comment type="pathway">
    <text evidence="1">Carbohydrate metabolism; D-ribose degradation; D-ribose 5-phosphate from beta-D-ribopyranose: step 1/2.</text>
</comment>
<comment type="subunit">
    <text evidence="1">Homodecamer.</text>
</comment>
<comment type="subcellular location">
    <subcellularLocation>
        <location evidence="1">Cytoplasm</location>
    </subcellularLocation>
</comment>
<comment type="similarity">
    <text evidence="1">Belongs to the RbsD / FucU family. RbsD subfamily.</text>
</comment>
<keyword id="KW-0119">Carbohydrate metabolism</keyword>
<keyword id="KW-0963">Cytoplasm</keyword>
<keyword id="KW-0413">Isomerase</keyword>
<keyword id="KW-1185">Reference proteome</keyword>
<evidence type="ECO:0000255" key="1">
    <source>
        <dbReference type="HAMAP-Rule" id="MF_01661"/>
    </source>
</evidence>
<feature type="chain" id="PRO_1000187142" description="D-ribose pyranase">
    <location>
        <begin position="1"/>
        <end position="139"/>
    </location>
</feature>
<feature type="active site" description="Proton donor" evidence="1">
    <location>
        <position position="20"/>
    </location>
</feature>
<feature type="binding site" evidence="1">
    <location>
        <position position="28"/>
    </location>
    <ligand>
        <name>substrate</name>
    </ligand>
</feature>
<feature type="binding site" evidence="1">
    <location>
        <position position="106"/>
    </location>
    <ligand>
        <name>substrate</name>
    </ligand>
</feature>
<feature type="binding site" evidence="1">
    <location>
        <begin position="128"/>
        <end position="130"/>
    </location>
    <ligand>
        <name>substrate</name>
    </ligand>
</feature>
<protein>
    <recommendedName>
        <fullName evidence="1">D-ribose pyranase</fullName>
        <ecNumber evidence="1">5.4.99.62</ecNumber>
    </recommendedName>
</protein>